<proteinExistence type="inferred from homology"/>
<organism>
    <name type="scientific">Azobacteroides pseudotrichonymphae genomovar. CFP2</name>
    <dbReference type="NCBI Taxonomy" id="511995"/>
    <lineage>
        <taxon>Bacteria</taxon>
        <taxon>Pseudomonadati</taxon>
        <taxon>Bacteroidota</taxon>
        <taxon>Bacteroidia</taxon>
        <taxon>Bacteroidales</taxon>
        <taxon>Candidatus Azobacteroides</taxon>
    </lineage>
</organism>
<comment type="function">
    <text evidence="1">This is one of the proteins that binds to the 5S RNA in the ribosome where it forms part of the central protuberance.</text>
</comment>
<comment type="subunit">
    <text evidence="1">Part of the 50S ribosomal subunit; part of the 5S rRNA/L5/L18/L25 subcomplex. Contacts the 5S rRNA. Binds to the 5S rRNA independently of L5 and L18.</text>
</comment>
<comment type="similarity">
    <text evidence="1">Belongs to the bacterial ribosomal protein bL25 family. CTC subfamily.</text>
</comment>
<name>RL25_AZOPC</name>
<keyword id="KW-1185">Reference proteome</keyword>
<keyword id="KW-0687">Ribonucleoprotein</keyword>
<keyword id="KW-0689">Ribosomal protein</keyword>
<keyword id="KW-0694">RNA-binding</keyword>
<keyword id="KW-0699">rRNA-binding</keyword>
<evidence type="ECO:0000255" key="1">
    <source>
        <dbReference type="HAMAP-Rule" id="MF_01334"/>
    </source>
</evidence>
<evidence type="ECO:0000305" key="2"/>
<protein>
    <recommendedName>
        <fullName evidence="1">Large ribosomal subunit protein bL25</fullName>
    </recommendedName>
    <alternativeName>
        <fullName evidence="2">50S ribosomal protein L25</fullName>
    </alternativeName>
    <alternativeName>
        <fullName evidence="1">General stress protein CTC</fullName>
    </alternativeName>
</protein>
<gene>
    <name evidence="1" type="primary">rplY</name>
    <name evidence="1" type="synonym">ctc</name>
    <name type="ordered locus">CFPG_132</name>
</gene>
<accession>B6YQC3</accession>
<dbReference type="EMBL" id="AP010656">
    <property type="protein sequence ID" value="BAG83395.1"/>
    <property type="molecule type" value="Genomic_DNA"/>
</dbReference>
<dbReference type="RefSeq" id="WP_012573156.1">
    <property type="nucleotide sequence ID" value="NC_011565.1"/>
</dbReference>
<dbReference type="SMR" id="B6YQC3"/>
<dbReference type="STRING" id="511995.CFPG_132"/>
<dbReference type="KEGG" id="aps:CFPG_132"/>
<dbReference type="eggNOG" id="COG1825">
    <property type="taxonomic scope" value="Bacteria"/>
</dbReference>
<dbReference type="HOGENOM" id="CLU_075939_2_1_10"/>
<dbReference type="OrthoDB" id="9786489at2"/>
<dbReference type="Proteomes" id="UP000000723">
    <property type="component" value="Chromosome"/>
</dbReference>
<dbReference type="GO" id="GO:0022625">
    <property type="term" value="C:cytosolic large ribosomal subunit"/>
    <property type="evidence" value="ECO:0007669"/>
    <property type="project" value="TreeGrafter"/>
</dbReference>
<dbReference type="GO" id="GO:0008097">
    <property type="term" value="F:5S rRNA binding"/>
    <property type="evidence" value="ECO:0007669"/>
    <property type="project" value="InterPro"/>
</dbReference>
<dbReference type="GO" id="GO:0003735">
    <property type="term" value="F:structural constituent of ribosome"/>
    <property type="evidence" value="ECO:0007669"/>
    <property type="project" value="InterPro"/>
</dbReference>
<dbReference type="GO" id="GO:0006412">
    <property type="term" value="P:translation"/>
    <property type="evidence" value="ECO:0007669"/>
    <property type="project" value="UniProtKB-UniRule"/>
</dbReference>
<dbReference type="CDD" id="cd00495">
    <property type="entry name" value="Ribosomal_L25_TL5_CTC"/>
    <property type="match status" value="1"/>
</dbReference>
<dbReference type="Gene3D" id="2.170.120.20">
    <property type="entry name" value="Ribosomal protein L25, beta domain"/>
    <property type="match status" value="1"/>
</dbReference>
<dbReference type="Gene3D" id="2.40.240.10">
    <property type="entry name" value="Ribosomal Protein L25, Chain P"/>
    <property type="match status" value="1"/>
</dbReference>
<dbReference type="HAMAP" id="MF_01334">
    <property type="entry name" value="Ribosomal_bL25_CTC"/>
    <property type="match status" value="1"/>
</dbReference>
<dbReference type="InterPro" id="IPR020056">
    <property type="entry name" value="Rbsml_bL25/Gln-tRNA_synth_N"/>
</dbReference>
<dbReference type="InterPro" id="IPR011035">
    <property type="entry name" value="Ribosomal_bL25/Gln-tRNA_synth"/>
</dbReference>
<dbReference type="InterPro" id="IPR020057">
    <property type="entry name" value="Ribosomal_bL25_b-dom"/>
</dbReference>
<dbReference type="InterPro" id="IPR037121">
    <property type="entry name" value="Ribosomal_bL25_C"/>
</dbReference>
<dbReference type="InterPro" id="IPR001021">
    <property type="entry name" value="Ribosomal_bL25_long"/>
</dbReference>
<dbReference type="InterPro" id="IPR029751">
    <property type="entry name" value="Ribosomal_L25_dom"/>
</dbReference>
<dbReference type="InterPro" id="IPR020930">
    <property type="entry name" value="Ribosomal_uL5_bac-type"/>
</dbReference>
<dbReference type="NCBIfam" id="TIGR00731">
    <property type="entry name" value="bL25_bact_ctc"/>
    <property type="match status" value="1"/>
</dbReference>
<dbReference type="NCBIfam" id="NF004132">
    <property type="entry name" value="PRK05618.2-2"/>
    <property type="match status" value="1"/>
</dbReference>
<dbReference type="PANTHER" id="PTHR33284">
    <property type="entry name" value="RIBOSOMAL PROTEIN L25/GLN-TRNA SYNTHETASE, ANTI-CODON-BINDING DOMAIN-CONTAINING PROTEIN"/>
    <property type="match status" value="1"/>
</dbReference>
<dbReference type="PANTHER" id="PTHR33284:SF1">
    <property type="entry name" value="RIBOSOMAL PROTEIN L25_GLN-TRNA SYNTHETASE, ANTI-CODON-BINDING DOMAIN-CONTAINING PROTEIN"/>
    <property type="match status" value="1"/>
</dbReference>
<dbReference type="Pfam" id="PF01386">
    <property type="entry name" value="Ribosomal_L25p"/>
    <property type="match status" value="1"/>
</dbReference>
<dbReference type="Pfam" id="PF14693">
    <property type="entry name" value="Ribosomal_TL5_C"/>
    <property type="match status" value="1"/>
</dbReference>
<dbReference type="SUPFAM" id="SSF50715">
    <property type="entry name" value="Ribosomal protein L25-like"/>
    <property type="match status" value="1"/>
</dbReference>
<sequence length="189" mass="21668">MKTFQLKGFRRDFLGKKAVKAYRKESLIPCVLYGGNENVIHFNVFRENLRKLVYTPDVFIVNLCIEEKLYLSILKEIQFHPVNDEILHVDFLRIFKNKPVIIEIPVVLEGLAEGIKAGGKLCSEMRKLKVKGFYKDFPERLVINVENLELGKTIQVGKLSFDNLELLNAKDNVVASVKLTRTARSTVSQ</sequence>
<reference key="1">
    <citation type="journal article" date="2008" name="Science">
        <title>Genome of an endosymbiont coupling N2 fixation to cellulolysis within RT protist cells in termite gut.</title>
        <authorList>
            <person name="Hongoh Y."/>
            <person name="Sharma V.K."/>
            <person name="Prakash T."/>
            <person name="Noda S."/>
            <person name="Toh H."/>
            <person name="Taylor T.D."/>
            <person name="Kudo T."/>
            <person name="Sakaki Y."/>
            <person name="Toyoda A."/>
            <person name="Hattori M."/>
            <person name="Ohkuma M."/>
        </authorList>
    </citation>
    <scope>NUCLEOTIDE SEQUENCE [LARGE SCALE GENOMIC DNA]</scope>
</reference>
<feature type="chain" id="PRO_1000142486" description="Large ribosomal subunit protein bL25">
    <location>
        <begin position="1"/>
        <end position="189"/>
    </location>
</feature>